<dbReference type="EC" id="3.1.3.12"/>
<dbReference type="EMBL" id="AF213176">
    <property type="protein sequence ID" value="AAF34581.1"/>
    <property type="molecule type" value="Genomic_DNA"/>
</dbReference>
<dbReference type="EMBL" id="FQ312003">
    <property type="protein sequence ID" value="CBW17957.1"/>
    <property type="molecule type" value="Genomic_DNA"/>
</dbReference>
<dbReference type="RefSeq" id="WP_000830110.1">
    <property type="nucleotide sequence ID" value="NZ_QASL01000015.1"/>
</dbReference>
<dbReference type="PDB" id="6UPB">
    <property type="method" value="X-ray"/>
    <property type="resolution" value="1.89 A"/>
    <property type="chains" value="A/B=1-267"/>
</dbReference>
<dbReference type="PDB" id="6UPC">
    <property type="method" value="X-ray"/>
    <property type="resolution" value="2.50 A"/>
    <property type="chains" value="A/B=1-267"/>
</dbReference>
<dbReference type="PDB" id="6UPD">
    <property type="method" value="X-ray"/>
    <property type="resolution" value="2.05 A"/>
    <property type="chains" value="A/B=1-267"/>
</dbReference>
<dbReference type="PDB" id="6UPE">
    <property type="method" value="X-ray"/>
    <property type="resolution" value="2.24 A"/>
    <property type="chains" value="A/B=1-267"/>
</dbReference>
<dbReference type="PDBsum" id="6UPB"/>
<dbReference type="PDBsum" id="6UPC"/>
<dbReference type="PDBsum" id="6UPD"/>
<dbReference type="PDBsum" id="6UPE"/>
<dbReference type="SMR" id="E1WGG9"/>
<dbReference type="KEGG" id="sey:SL1344_1863"/>
<dbReference type="PATRIC" id="fig|216597.6.peg.2068"/>
<dbReference type="HOGENOM" id="CLU_037265_2_0_6"/>
<dbReference type="BioCyc" id="SENT216597:SL1344_RS09650-MONOMER"/>
<dbReference type="UniPathway" id="UPA00299"/>
<dbReference type="Proteomes" id="UP000008962">
    <property type="component" value="Chromosome"/>
</dbReference>
<dbReference type="GO" id="GO:0000287">
    <property type="term" value="F:magnesium ion binding"/>
    <property type="evidence" value="ECO:0007669"/>
    <property type="project" value="UniProtKB-ARBA"/>
</dbReference>
<dbReference type="GO" id="GO:0004805">
    <property type="term" value="F:trehalose-phosphatase activity"/>
    <property type="evidence" value="ECO:0007669"/>
    <property type="project" value="UniProtKB-EC"/>
</dbReference>
<dbReference type="GO" id="GO:0005992">
    <property type="term" value="P:trehalose biosynthetic process"/>
    <property type="evidence" value="ECO:0007669"/>
    <property type="project" value="UniProtKB-UniPathway"/>
</dbReference>
<dbReference type="CDD" id="cd01627">
    <property type="entry name" value="HAD_TPP"/>
    <property type="match status" value="1"/>
</dbReference>
<dbReference type="Gene3D" id="3.40.50.1000">
    <property type="entry name" value="HAD superfamily/HAD-like"/>
    <property type="match status" value="1"/>
</dbReference>
<dbReference type="Gene3D" id="3.30.70.1020">
    <property type="entry name" value="Trehalose-6-phosphate phosphatase related protein, domain 2"/>
    <property type="match status" value="1"/>
</dbReference>
<dbReference type="InterPro" id="IPR036412">
    <property type="entry name" value="HAD-like_sf"/>
</dbReference>
<dbReference type="InterPro" id="IPR006379">
    <property type="entry name" value="HAD-SF_hydro_IIB"/>
</dbReference>
<dbReference type="InterPro" id="IPR023214">
    <property type="entry name" value="HAD_sf"/>
</dbReference>
<dbReference type="InterPro" id="IPR044651">
    <property type="entry name" value="OTSB-like"/>
</dbReference>
<dbReference type="InterPro" id="IPR003337">
    <property type="entry name" value="Trehalose_PPase"/>
</dbReference>
<dbReference type="NCBIfam" id="TIGR01484">
    <property type="entry name" value="HAD-SF-IIB"/>
    <property type="match status" value="1"/>
</dbReference>
<dbReference type="NCBIfam" id="NF007560">
    <property type="entry name" value="PRK10187.1"/>
    <property type="match status" value="1"/>
</dbReference>
<dbReference type="NCBIfam" id="TIGR00685">
    <property type="entry name" value="T6PP"/>
    <property type="match status" value="1"/>
</dbReference>
<dbReference type="PANTHER" id="PTHR43768">
    <property type="entry name" value="TREHALOSE 6-PHOSPHATE PHOSPHATASE"/>
    <property type="match status" value="1"/>
</dbReference>
<dbReference type="PANTHER" id="PTHR43768:SF3">
    <property type="entry name" value="TREHALOSE 6-PHOSPHATE PHOSPHATASE"/>
    <property type="match status" value="1"/>
</dbReference>
<dbReference type="Pfam" id="PF02358">
    <property type="entry name" value="Trehalose_PPase"/>
    <property type="match status" value="1"/>
</dbReference>
<dbReference type="SUPFAM" id="SSF56784">
    <property type="entry name" value="HAD-like"/>
    <property type="match status" value="1"/>
</dbReference>
<reference key="1">
    <citation type="submission" date="1999-12" db="EMBL/GenBank/DDBJ databases">
        <title>Trehalose biosynthesis operon in S. typhimurium.</title>
        <authorList>
            <person name="Howells A.M."/>
            <person name="Bullifent H.L."/>
            <person name="Dhaliwal K."/>
            <person name="Griffin K."/>
            <person name="Frith G."/>
            <person name="Tunnacliffe A."/>
            <person name="Titball R.W."/>
        </authorList>
    </citation>
    <scope>NUCLEOTIDE SEQUENCE [GENOMIC DNA]</scope>
    <source>
        <strain>SL1344</strain>
    </source>
</reference>
<reference key="2">
    <citation type="journal article" date="2012" name="Proc. Natl. Acad. Sci. U.S.A.">
        <title>The transcriptional landscape and small RNAs of Salmonella enterica serovar Typhimurium.</title>
        <authorList>
            <person name="Kroger C."/>
            <person name="Dillon S.C."/>
            <person name="Cameron A.D."/>
            <person name="Papenfort K."/>
            <person name="Sivasankaran S.K."/>
            <person name="Hokamp K."/>
            <person name="Chao Y."/>
            <person name="Sittka A."/>
            <person name="Hebrard M."/>
            <person name="Handler K."/>
            <person name="Colgan A."/>
            <person name="Leekitcharoenphon P."/>
            <person name="Langridge G.C."/>
            <person name="Lohan A.J."/>
            <person name="Loftus B."/>
            <person name="Lucchini S."/>
            <person name="Ussery D.W."/>
            <person name="Dorman C.J."/>
            <person name="Thomson N.R."/>
            <person name="Vogel J."/>
            <person name="Hinton J.C."/>
        </authorList>
    </citation>
    <scope>NUCLEOTIDE SEQUENCE [LARGE SCALE GENOMIC DNA]</scope>
    <source>
        <strain>SL1344</strain>
    </source>
</reference>
<sequence length="267" mass="29261">MAEPLTVSPELTANYAYFFDLDGTLAEIKPHPDQVVVPHKILQLLDRLAAHNAGALALISGRSMTELDALAKPFRFPLAGVHGAERRDINGKTHIVRLPEAVVREVEALLRSTLVALPGTELESKGMAFALHYRQAPEHEAALLALAQHVTQHWPQLALQLGKCVVEIKPKGTNKGEAIAAFMQEAPFAGRIPVFVGDDLTDEAGFGVVNHAGGISVKVGVGATQAAWRLESVPDVWRWLEQINYPQQEQQVMNNRRDGYESFSRSI</sequence>
<keyword id="KW-0002">3D-structure</keyword>
<keyword id="KW-0378">Hydrolase</keyword>
<keyword id="KW-0460">Magnesium</keyword>
<keyword id="KW-0479">Metal-binding</keyword>
<gene>
    <name type="primary">otsB</name>
    <name type="ordered locus">SL1344_1863</name>
</gene>
<name>OTSB_SALTS</name>
<feature type="chain" id="PRO_0000406086" description="Trehalose-phosphate phosphatase">
    <location>
        <begin position="1"/>
        <end position="267"/>
    </location>
</feature>
<feature type="active site" description="Nucleophile" evidence="1">
    <location>
        <position position="20"/>
    </location>
</feature>
<feature type="binding site" evidence="1">
    <location>
        <begin position="20"/>
        <end position="22"/>
    </location>
    <ligand>
        <name>substrate</name>
    </ligand>
</feature>
<feature type="binding site" evidence="1">
    <location>
        <position position="20"/>
    </location>
    <ligand>
        <name>Mg(2+)</name>
        <dbReference type="ChEBI" id="CHEBI:18420"/>
    </ligand>
</feature>
<feature type="binding site" evidence="1">
    <location>
        <position position="22"/>
    </location>
    <ligand>
        <name>Mg(2+)</name>
        <dbReference type="ChEBI" id="CHEBI:18420"/>
    </ligand>
</feature>
<feature type="binding site" evidence="1">
    <location>
        <position position="198"/>
    </location>
    <ligand>
        <name>Mg(2+)</name>
        <dbReference type="ChEBI" id="CHEBI:18420"/>
    </ligand>
</feature>
<feature type="strand" evidence="3">
    <location>
        <begin position="13"/>
        <end position="19"/>
    </location>
</feature>
<feature type="turn" evidence="3">
    <location>
        <begin position="22"/>
        <end position="24"/>
    </location>
</feature>
<feature type="helix" evidence="3">
    <location>
        <begin position="32"/>
        <end position="34"/>
    </location>
</feature>
<feature type="helix" evidence="3">
    <location>
        <begin position="39"/>
        <end position="50"/>
    </location>
</feature>
<feature type="turn" evidence="3">
    <location>
        <begin position="51"/>
        <end position="54"/>
    </location>
</feature>
<feature type="strand" evidence="3">
    <location>
        <begin position="56"/>
        <end position="59"/>
    </location>
</feature>
<feature type="helix" evidence="3">
    <location>
        <begin position="64"/>
        <end position="71"/>
    </location>
</feature>
<feature type="strand" evidence="3">
    <location>
        <begin position="78"/>
        <end position="80"/>
    </location>
</feature>
<feature type="helix" evidence="3">
    <location>
        <begin position="81"/>
        <end position="83"/>
    </location>
</feature>
<feature type="strand" evidence="3">
    <location>
        <begin position="85"/>
        <end position="87"/>
    </location>
</feature>
<feature type="strand" evidence="3">
    <location>
        <begin position="93"/>
        <end position="95"/>
    </location>
</feature>
<feature type="helix" evidence="3">
    <location>
        <begin position="100"/>
        <end position="115"/>
    </location>
</feature>
<feature type="strand" evidence="3">
    <location>
        <begin position="121"/>
        <end position="124"/>
    </location>
</feature>
<feature type="strand" evidence="3">
    <location>
        <begin position="129"/>
        <end position="132"/>
    </location>
</feature>
<feature type="helix" evidence="3">
    <location>
        <begin position="137"/>
        <end position="139"/>
    </location>
</feature>
<feature type="helix" evidence="3">
    <location>
        <begin position="140"/>
        <end position="153"/>
    </location>
</feature>
<feature type="strand" evidence="3">
    <location>
        <begin position="157"/>
        <end position="162"/>
    </location>
</feature>
<feature type="strand" evidence="3">
    <location>
        <begin position="165"/>
        <end position="170"/>
    </location>
</feature>
<feature type="helix" evidence="3">
    <location>
        <begin position="175"/>
        <end position="183"/>
    </location>
</feature>
<feature type="turn" evidence="3">
    <location>
        <begin position="186"/>
        <end position="190"/>
    </location>
</feature>
<feature type="strand" evidence="3">
    <location>
        <begin position="191"/>
        <end position="197"/>
    </location>
</feature>
<feature type="helix" evidence="3">
    <location>
        <begin position="200"/>
        <end position="211"/>
    </location>
</feature>
<feature type="strand" evidence="3">
    <location>
        <begin position="215"/>
        <end position="222"/>
    </location>
</feature>
<feature type="strand" evidence="3">
    <location>
        <begin position="227"/>
        <end position="232"/>
    </location>
</feature>
<feature type="helix" evidence="3">
    <location>
        <begin position="233"/>
        <end position="244"/>
    </location>
</feature>
<protein>
    <recommendedName>
        <fullName>Trehalose-phosphate phosphatase</fullName>
        <shortName>TPP</shortName>
        <ecNumber>3.1.3.12</ecNumber>
    </recommendedName>
    <alternativeName>
        <fullName>Trehalose 6-phosphate phosphatase</fullName>
    </alternativeName>
    <alternativeName>
        <fullName>Trehalose-phosphatase</fullName>
    </alternativeName>
</protein>
<comment type="function">
    <text evidence="1">Removes the phosphate from trehalose 6-phosphate to produce free trehalose.</text>
</comment>
<comment type="catalytic activity">
    <reaction>
        <text>alpha,alpha-trehalose 6-phosphate + H2O = alpha,alpha-trehalose + phosphate</text>
        <dbReference type="Rhea" id="RHEA:23420"/>
        <dbReference type="ChEBI" id="CHEBI:15377"/>
        <dbReference type="ChEBI" id="CHEBI:16551"/>
        <dbReference type="ChEBI" id="CHEBI:43474"/>
        <dbReference type="ChEBI" id="CHEBI:58429"/>
        <dbReference type="EC" id="3.1.3.12"/>
    </reaction>
</comment>
<comment type="cofactor">
    <cofactor evidence="1">
        <name>Mg(2+)</name>
        <dbReference type="ChEBI" id="CHEBI:18420"/>
    </cofactor>
</comment>
<comment type="pathway">
    <text>Glycan biosynthesis; trehalose biosynthesis.</text>
</comment>
<comment type="similarity">
    <text evidence="2">Belongs to the trehalose phosphatase family.</text>
</comment>
<organism>
    <name type="scientific">Salmonella typhimurium (strain SL1344)</name>
    <dbReference type="NCBI Taxonomy" id="216597"/>
    <lineage>
        <taxon>Bacteria</taxon>
        <taxon>Pseudomonadati</taxon>
        <taxon>Pseudomonadota</taxon>
        <taxon>Gammaproteobacteria</taxon>
        <taxon>Enterobacterales</taxon>
        <taxon>Enterobacteriaceae</taxon>
        <taxon>Salmonella</taxon>
    </lineage>
</organism>
<proteinExistence type="evidence at protein level"/>
<accession>E1WGG9</accession>
<accession>Q9L894</accession>
<evidence type="ECO:0000250" key="1"/>
<evidence type="ECO:0000305" key="2"/>
<evidence type="ECO:0007829" key="3">
    <source>
        <dbReference type="PDB" id="6UPB"/>
    </source>
</evidence>